<evidence type="ECO:0000250" key="1">
    <source>
        <dbReference type="UniProtKB" id="P16152"/>
    </source>
</evidence>
<evidence type="ECO:0000250" key="2">
    <source>
        <dbReference type="UniProtKB" id="P48758"/>
    </source>
</evidence>
<evidence type="ECO:0000250" key="3">
    <source>
        <dbReference type="UniProtKB" id="Q28960"/>
    </source>
</evidence>
<evidence type="ECO:0000255" key="4">
    <source>
        <dbReference type="PROSITE-ProRule" id="PRU10001"/>
    </source>
</evidence>
<evidence type="ECO:0000305" key="5"/>
<proteinExistence type="evidence at transcript level"/>
<sequence>MPSDRRVALVTGANKGVGFAITRALCRLFSGDVLLTAQDEAQGQAAVQQLQAEGLSPRFHQLDITDLQSIRALRDFLRRAYGGLNVLVNNAVIAFKMEDTTPFHIQAEVTMKTNFDGTRDVCTELLPLMRPGGRVVNVSSMTCLRALKSCSPELQQKFRSETITEEELVGLMKKFVEDTKKGVHQTEGWPDTAYGVTKMGVTVLSRIQARHLSEHRGGDKILVNACCPGWVRTDMGGPNATKSPEEGAETPVYLALLPPDAEGPHGQFVMDKKVEQW</sequence>
<keyword id="KW-0963">Cytoplasm</keyword>
<keyword id="KW-0443">Lipid metabolism</keyword>
<keyword id="KW-0521">NADP</keyword>
<keyword id="KW-0560">Oxidoreductase</keyword>
<keyword id="KW-0597">Phosphoprotein</keyword>
<keyword id="KW-1185">Reference proteome</keyword>
<gene>
    <name evidence="1" type="primary">CBR1</name>
    <name type="synonym">CBR</name>
</gene>
<comment type="function">
    <text evidence="1 3">NADPH-dependent reductase with broad substrate specificity. Catalyzes the reduction of a wide variety of carbonyl compounds including quinones, prostaglandins, menadione, plus various xenobiotics. Catalyzes the reduction of the antitumor anthracyclines doxorubicin and daunorubicin to the cardiotoxic compounds doxorubicinol and daunorubicinol (By similarity). Can convert prostaglandin E to prostaglandin F2-alpha (By similarity). Can bind glutathione, which explains its higher affinity for glutathione-conjugated substrates. Catalyzes the reduction of S-nitrosoglutathione. In addition, participates in the glucocorticoid metabolism by catalyzing the NADPH-dependent cortisol/corticosterone into 20beta-dihydrocortisol (20b-DHF) or 20beta-corticosterone (20b-DHB), which are weak agonists of NR3C1 and NR3C2 in adipose tissue (By similarity).</text>
</comment>
<comment type="catalytic activity">
    <reaction evidence="1">
        <text>a secondary alcohol + NADP(+) = a ketone + NADPH + H(+)</text>
        <dbReference type="Rhea" id="RHEA:19257"/>
        <dbReference type="ChEBI" id="CHEBI:15378"/>
        <dbReference type="ChEBI" id="CHEBI:17087"/>
        <dbReference type="ChEBI" id="CHEBI:35681"/>
        <dbReference type="ChEBI" id="CHEBI:57783"/>
        <dbReference type="ChEBI" id="CHEBI:58349"/>
        <dbReference type="EC" id="1.1.1.184"/>
    </reaction>
</comment>
<comment type="catalytic activity">
    <reaction evidence="3">
        <text>prostaglandin F2alpha + NADP(+) = prostaglandin E2 + NADPH + H(+)</text>
        <dbReference type="Rhea" id="RHEA:24508"/>
        <dbReference type="ChEBI" id="CHEBI:15378"/>
        <dbReference type="ChEBI" id="CHEBI:57404"/>
        <dbReference type="ChEBI" id="CHEBI:57783"/>
        <dbReference type="ChEBI" id="CHEBI:58349"/>
        <dbReference type="ChEBI" id="CHEBI:606564"/>
        <dbReference type="EC" id="1.1.1.189"/>
    </reaction>
    <physiologicalReaction direction="right-to-left" evidence="3">
        <dbReference type="Rhea" id="RHEA:24510"/>
    </physiologicalReaction>
</comment>
<comment type="catalytic activity">
    <reaction evidence="1">
        <text>prostaglandin E1 + NADP(+) = 15-oxoprostaglandin E1 + NADPH + H(+)</text>
        <dbReference type="Rhea" id="RHEA:11636"/>
        <dbReference type="ChEBI" id="CHEBI:15378"/>
        <dbReference type="ChEBI" id="CHEBI:57397"/>
        <dbReference type="ChEBI" id="CHEBI:57401"/>
        <dbReference type="ChEBI" id="CHEBI:57783"/>
        <dbReference type="ChEBI" id="CHEBI:58349"/>
        <dbReference type="EC" id="1.1.1.197"/>
    </reaction>
    <physiologicalReaction direction="left-to-right" evidence="1">
        <dbReference type="Rhea" id="RHEA:11637"/>
    </physiologicalReaction>
</comment>
<comment type="catalytic activity">
    <reaction evidence="1">
        <text>menadione + NADPH + H(+) = menadiol + NADP(+)</text>
        <dbReference type="Rhea" id="RHEA:63492"/>
        <dbReference type="ChEBI" id="CHEBI:6746"/>
        <dbReference type="ChEBI" id="CHEBI:15378"/>
        <dbReference type="ChEBI" id="CHEBI:28869"/>
        <dbReference type="ChEBI" id="CHEBI:57783"/>
        <dbReference type="ChEBI" id="CHEBI:58349"/>
    </reaction>
</comment>
<comment type="catalytic activity">
    <reaction evidence="3">
        <text>prostaglandin D2 + NADP(+) = 15-oxoprostaglandin D2 + NADPH + H(+)</text>
        <dbReference type="Rhea" id="RHEA:20744"/>
        <dbReference type="ChEBI" id="CHEBI:15378"/>
        <dbReference type="ChEBI" id="CHEBI:57406"/>
        <dbReference type="ChEBI" id="CHEBI:57408"/>
        <dbReference type="ChEBI" id="CHEBI:57783"/>
        <dbReference type="ChEBI" id="CHEBI:58349"/>
        <dbReference type="EC" id="1.1.1.196"/>
    </reaction>
    <physiologicalReaction direction="left-to-right" evidence="3">
        <dbReference type="Rhea" id="RHEA:20745"/>
    </physiologicalReaction>
</comment>
<comment type="catalytic activity">
    <reaction evidence="3">
        <text>prostaglandin E2 + NADP(+) = 15-oxoprostaglandin E2 + NADPH + H(+)</text>
        <dbReference type="Rhea" id="RHEA:63476"/>
        <dbReference type="ChEBI" id="CHEBI:15378"/>
        <dbReference type="ChEBI" id="CHEBI:57400"/>
        <dbReference type="ChEBI" id="CHEBI:57783"/>
        <dbReference type="ChEBI" id="CHEBI:58349"/>
        <dbReference type="ChEBI" id="CHEBI:606564"/>
    </reaction>
    <physiologicalReaction direction="left-to-right" evidence="3">
        <dbReference type="Rhea" id="RHEA:63477"/>
    </physiologicalReaction>
</comment>
<comment type="catalytic activity">
    <reaction evidence="3">
        <text>prostaglandin F2alpha + NADP(+) = 15-oxoprostaglandin F2alpha + NADPH + H(+)</text>
        <dbReference type="Rhea" id="RHEA:63480"/>
        <dbReference type="ChEBI" id="CHEBI:15378"/>
        <dbReference type="ChEBI" id="CHEBI:57404"/>
        <dbReference type="ChEBI" id="CHEBI:57783"/>
        <dbReference type="ChEBI" id="CHEBI:58349"/>
        <dbReference type="ChEBI" id="CHEBI:133409"/>
    </reaction>
    <physiologicalReaction direction="left-to-right" evidence="3">
        <dbReference type="Rhea" id="RHEA:63481"/>
    </physiologicalReaction>
</comment>
<comment type="catalytic activity">
    <reaction evidence="1">
        <text>daunorubicin + NADPH + H(+) = 13-dihydrodaunorubicin + NADP(+)</text>
        <dbReference type="Rhea" id="RHEA:63504"/>
        <dbReference type="ChEBI" id="CHEBI:15378"/>
        <dbReference type="ChEBI" id="CHEBI:57783"/>
        <dbReference type="ChEBI" id="CHEBI:58349"/>
        <dbReference type="ChEBI" id="CHEBI:64677"/>
        <dbReference type="ChEBI" id="CHEBI:75296"/>
    </reaction>
    <physiologicalReaction direction="left-to-right" evidence="1">
        <dbReference type="Rhea" id="RHEA:63505"/>
    </physiologicalReaction>
</comment>
<comment type="catalytic activity">
    <reaction evidence="3">
        <text>S-nitrosoglutathione + NADPH + H(+) = S-(hydroxysulfenamide)glutathione + NADP(+)</text>
        <dbReference type="Rhea" id="RHEA:63500"/>
        <dbReference type="ChEBI" id="CHEBI:15378"/>
        <dbReference type="ChEBI" id="CHEBI:57783"/>
        <dbReference type="ChEBI" id="CHEBI:58349"/>
        <dbReference type="ChEBI" id="CHEBI:145544"/>
        <dbReference type="ChEBI" id="CHEBI:229723"/>
    </reaction>
</comment>
<comment type="catalytic activity">
    <reaction evidence="1">
        <text>a primary alcohol + NADP(+) = an aldehyde + NADPH + H(+)</text>
        <dbReference type="Rhea" id="RHEA:15937"/>
        <dbReference type="ChEBI" id="CHEBI:15378"/>
        <dbReference type="ChEBI" id="CHEBI:15734"/>
        <dbReference type="ChEBI" id="CHEBI:17478"/>
        <dbReference type="ChEBI" id="CHEBI:57783"/>
        <dbReference type="ChEBI" id="CHEBI:58349"/>
        <dbReference type="EC" id="1.1.1.71"/>
    </reaction>
</comment>
<comment type="catalytic activity">
    <reaction evidence="1">
        <text>cortisol + NADPH + H(+) = 20beta-dihydrocortisol + NADP(+)</text>
        <dbReference type="Rhea" id="RHEA:70215"/>
        <dbReference type="ChEBI" id="CHEBI:15378"/>
        <dbReference type="ChEBI" id="CHEBI:17650"/>
        <dbReference type="ChEBI" id="CHEBI:57783"/>
        <dbReference type="ChEBI" id="CHEBI:58349"/>
        <dbReference type="ChEBI" id="CHEBI:139311"/>
    </reaction>
    <physiologicalReaction direction="left-to-right" evidence="1">
        <dbReference type="Rhea" id="RHEA:70216"/>
    </physiologicalReaction>
</comment>
<comment type="catalytic activity">
    <reaction evidence="2">
        <text>corticosterone + NADPH + H(+) = 20beta-dihydrocorticosterone + NADP(+)</text>
        <dbReference type="Rhea" id="RHEA:70219"/>
        <dbReference type="ChEBI" id="CHEBI:15378"/>
        <dbReference type="ChEBI" id="CHEBI:16827"/>
        <dbReference type="ChEBI" id="CHEBI:57783"/>
        <dbReference type="ChEBI" id="CHEBI:58349"/>
        <dbReference type="ChEBI" id="CHEBI:189050"/>
    </reaction>
    <physiologicalReaction direction="left-to-right" evidence="2">
        <dbReference type="Rhea" id="RHEA:70220"/>
    </physiologicalReaction>
</comment>
<comment type="subunit">
    <text evidence="3">Monomer.</text>
</comment>
<comment type="subcellular location">
    <subcellularLocation>
        <location evidence="3">Cytoplasm</location>
    </subcellularLocation>
</comment>
<comment type="tissue specificity">
    <text>Present in liver and kidney.</text>
</comment>
<comment type="similarity">
    <text evidence="5">Belongs to the short-chain dehydrogenases/reductases (SDR) family.</text>
</comment>
<accession>P47844</accession>
<dbReference type="EC" id="1.1.1.184" evidence="1"/>
<dbReference type="EC" id="1.1.1.196" evidence="3"/>
<dbReference type="EC" id="1.1.1.197" evidence="1"/>
<dbReference type="EC" id="1.1.1.71" evidence="1"/>
<dbReference type="EC" id="1.1.1.189" evidence="3"/>
<dbReference type="EMBL" id="U07051">
    <property type="protein sequence ID" value="AAA77670.1"/>
    <property type="molecule type" value="mRNA"/>
</dbReference>
<dbReference type="EMBL" id="U09244">
    <property type="protein sequence ID" value="AAA82159.1"/>
    <property type="molecule type" value="mRNA"/>
</dbReference>
<dbReference type="RefSeq" id="NP_001076218.1">
    <property type="nucleotide sequence ID" value="NM_001082749.1"/>
</dbReference>
<dbReference type="SMR" id="P47844"/>
<dbReference type="FunCoup" id="P47844">
    <property type="interactions" value="180"/>
</dbReference>
<dbReference type="STRING" id="9986.ENSOCUP00000016888"/>
<dbReference type="PaxDb" id="9986-ENSOCUP00000019219"/>
<dbReference type="GeneID" id="100009528"/>
<dbReference type="KEGG" id="ocu:100009528"/>
<dbReference type="CTD" id="873"/>
<dbReference type="eggNOG" id="KOG1208">
    <property type="taxonomic scope" value="Eukaryota"/>
</dbReference>
<dbReference type="InParanoid" id="P47844"/>
<dbReference type="OrthoDB" id="7289984at2759"/>
<dbReference type="Proteomes" id="UP000001811">
    <property type="component" value="Unplaced"/>
</dbReference>
<dbReference type="GO" id="GO:0005737">
    <property type="term" value="C:cytoplasm"/>
    <property type="evidence" value="ECO:0007669"/>
    <property type="project" value="UniProtKB-SubCell"/>
</dbReference>
<dbReference type="GO" id="GO:0047021">
    <property type="term" value="F:15-hydroxyprostaglandin dehydrogenase (NADP+) activity"/>
    <property type="evidence" value="ECO:0000250"/>
    <property type="project" value="UniProtKB"/>
</dbReference>
<dbReference type="GO" id="GO:0047020">
    <property type="term" value="F:15-hydroxyprostaglandin-D dehydrogenase (NADP+) activity"/>
    <property type="evidence" value="ECO:0007669"/>
    <property type="project" value="UniProtKB-EC"/>
</dbReference>
<dbReference type="GO" id="GO:0004090">
    <property type="term" value="F:carbonyl reductase (NADPH) activity"/>
    <property type="evidence" value="ECO:0000250"/>
    <property type="project" value="UniProtKB"/>
</dbReference>
<dbReference type="GO" id="GO:0050221">
    <property type="term" value="F:prostaglandin E2 9-reductase activity"/>
    <property type="evidence" value="ECO:0000250"/>
    <property type="project" value="UniProtKB"/>
</dbReference>
<dbReference type="GO" id="GO:0160163">
    <property type="term" value="F:S-nitrosoglutathione reductase (NADPH) activity"/>
    <property type="evidence" value="ECO:0007669"/>
    <property type="project" value="RHEA"/>
</dbReference>
<dbReference type="GO" id="GO:0006629">
    <property type="term" value="P:lipid metabolic process"/>
    <property type="evidence" value="ECO:0007669"/>
    <property type="project" value="UniProtKB-KW"/>
</dbReference>
<dbReference type="GO" id="GO:0042373">
    <property type="term" value="P:vitamin K metabolic process"/>
    <property type="evidence" value="ECO:0000250"/>
    <property type="project" value="UniProtKB"/>
</dbReference>
<dbReference type="GO" id="GO:0006805">
    <property type="term" value="P:xenobiotic metabolic process"/>
    <property type="evidence" value="ECO:0000250"/>
    <property type="project" value="UniProtKB"/>
</dbReference>
<dbReference type="CDD" id="cd05324">
    <property type="entry name" value="carb_red_PTCR-like_SDR_c"/>
    <property type="match status" value="1"/>
</dbReference>
<dbReference type="FunFam" id="3.40.50.720:FF:000164">
    <property type="entry name" value="Carbonyl reductase [NADPH] 1"/>
    <property type="match status" value="1"/>
</dbReference>
<dbReference type="Gene3D" id="3.40.50.720">
    <property type="entry name" value="NAD(P)-binding Rossmann-like Domain"/>
    <property type="match status" value="1"/>
</dbReference>
<dbReference type="InterPro" id="IPR045313">
    <property type="entry name" value="CBR1-like"/>
</dbReference>
<dbReference type="InterPro" id="IPR036291">
    <property type="entry name" value="NAD(P)-bd_dom_sf"/>
</dbReference>
<dbReference type="InterPro" id="IPR020904">
    <property type="entry name" value="Sc_DH/Rdtase_CS"/>
</dbReference>
<dbReference type="InterPro" id="IPR002347">
    <property type="entry name" value="SDR_fam"/>
</dbReference>
<dbReference type="PANTHER" id="PTHR43963">
    <property type="entry name" value="CARBONYL REDUCTASE 1-RELATED"/>
    <property type="match status" value="1"/>
</dbReference>
<dbReference type="PANTHER" id="PTHR43963:SF2">
    <property type="entry name" value="CARBONYL REDUCTASE [NADPH] 1"/>
    <property type="match status" value="1"/>
</dbReference>
<dbReference type="Pfam" id="PF00106">
    <property type="entry name" value="adh_short"/>
    <property type="match status" value="1"/>
</dbReference>
<dbReference type="PRINTS" id="PR00081">
    <property type="entry name" value="GDHRDH"/>
</dbReference>
<dbReference type="PRINTS" id="PR00080">
    <property type="entry name" value="SDRFAMILY"/>
</dbReference>
<dbReference type="SUPFAM" id="SSF51735">
    <property type="entry name" value="NAD(P)-binding Rossmann-fold domains"/>
    <property type="match status" value="1"/>
</dbReference>
<dbReference type="PROSITE" id="PS00061">
    <property type="entry name" value="ADH_SHORT"/>
    <property type="match status" value="1"/>
</dbReference>
<name>CBR1_RABIT</name>
<reference key="1">
    <citation type="journal article" date="1995" name="Gene">
        <title>Cloning and expression of the cDNA encoding rabbit liver carbonyl reductase.</title>
        <authorList>
            <person name="Gonzales B."/>
            <person name="Sapra A."/>
            <person name="Rivera H."/>
            <person name="Kaplan W.D."/>
            <person name="Yam B."/>
            <person name="Forrest G.L."/>
        </authorList>
    </citation>
    <scope>NUCLEOTIDE SEQUENCE [MRNA]</scope>
    <source>
        <tissue>Liver</tissue>
    </source>
</reference>
<organism>
    <name type="scientific">Oryctolagus cuniculus</name>
    <name type="common">Rabbit</name>
    <dbReference type="NCBI Taxonomy" id="9986"/>
    <lineage>
        <taxon>Eukaryota</taxon>
        <taxon>Metazoa</taxon>
        <taxon>Chordata</taxon>
        <taxon>Craniata</taxon>
        <taxon>Vertebrata</taxon>
        <taxon>Euteleostomi</taxon>
        <taxon>Mammalia</taxon>
        <taxon>Eutheria</taxon>
        <taxon>Euarchontoglires</taxon>
        <taxon>Glires</taxon>
        <taxon>Lagomorpha</taxon>
        <taxon>Leporidae</taxon>
        <taxon>Oryctolagus</taxon>
    </lineage>
</organism>
<feature type="chain" id="PRO_0000054606" description="Carbonyl reductase [NADPH] 1">
    <location>
        <begin position="1"/>
        <end position="277"/>
    </location>
</feature>
<feature type="active site" description="Proton acceptor" evidence="4">
    <location>
        <position position="194"/>
    </location>
</feature>
<feature type="binding site" evidence="1">
    <location>
        <begin position="10"/>
        <end position="34"/>
    </location>
    <ligand>
        <name>NADP(+)</name>
        <dbReference type="ChEBI" id="CHEBI:58349"/>
    </ligand>
</feature>
<feature type="binding site" evidence="1">
    <location>
        <begin position="63"/>
        <end position="64"/>
    </location>
    <ligand>
        <name>NADP(+)</name>
        <dbReference type="ChEBI" id="CHEBI:58349"/>
    </ligand>
</feature>
<feature type="binding site" evidence="1">
    <location>
        <position position="90"/>
    </location>
    <ligand>
        <name>NADP(+)</name>
        <dbReference type="ChEBI" id="CHEBI:58349"/>
    </ligand>
</feature>
<feature type="binding site" evidence="1">
    <location>
        <begin position="95"/>
        <end position="97"/>
    </location>
    <ligand>
        <name>glutathione</name>
        <dbReference type="ChEBI" id="CHEBI:57925"/>
    </ligand>
</feature>
<feature type="binding site" evidence="1">
    <location>
        <position position="106"/>
    </location>
    <ligand>
        <name>glutathione</name>
        <dbReference type="ChEBI" id="CHEBI:57925"/>
    </ligand>
</feature>
<feature type="binding site" evidence="1">
    <location>
        <position position="140"/>
    </location>
    <ligand>
        <name>substrate</name>
    </ligand>
</feature>
<feature type="binding site" evidence="1">
    <location>
        <begin position="193"/>
        <end position="194"/>
    </location>
    <ligand>
        <name>glutathione</name>
        <dbReference type="ChEBI" id="CHEBI:57925"/>
    </ligand>
</feature>
<feature type="binding site" evidence="1">
    <location>
        <begin position="194"/>
        <end position="198"/>
    </location>
    <ligand>
        <name>NADP(+)</name>
        <dbReference type="ChEBI" id="CHEBI:58349"/>
    </ligand>
</feature>
<feature type="binding site" evidence="1">
    <location>
        <begin position="231"/>
        <end position="233"/>
    </location>
    <ligand>
        <name>NADP(+)</name>
        <dbReference type="ChEBI" id="CHEBI:58349"/>
    </ligand>
</feature>
<feature type="modified residue" description="Phosphoserine" evidence="2">
    <location>
        <position position="30"/>
    </location>
</feature>
<feature type="sequence variant" description="In clone RCBR6.">
    <original>A</original>
    <variation>N</variation>
    <location>
        <position position="24"/>
    </location>
</feature>
<feature type="sequence variant" description="In clone RCBR6.">
    <original>A</original>
    <variation>E</variation>
    <location>
        <position position="80"/>
    </location>
</feature>
<feature type="sequence variant" description="In clone RCBR6.">
    <original>V</original>
    <variation>A</variation>
    <location>
        <position position="92"/>
    </location>
</feature>
<feature type="sequence variant" description="In clone RCBR6.">
    <original>H</original>
    <variation>Q</variation>
    <location>
        <position position="215"/>
    </location>
</feature>
<protein>
    <recommendedName>
        <fullName evidence="1">Carbonyl reductase [NADPH] 1</fullName>
        <ecNumber evidence="1">1.1.1.184</ecNumber>
    </recommendedName>
    <alternativeName>
        <fullName>15-hydroxyprostaglandin dehydrogenase [NADP(+)]</fullName>
        <ecNumber evidence="3">1.1.1.196</ecNumber>
        <ecNumber evidence="1">1.1.1.197</ecNumber>
    </alternativeName>
    <alternativeName>
        <fullName evidence="3">20-beta-hydroxysteroid dehydrogenase</fullName>
    </alternativeName>
    <alternativeName>
        <fullName>Alcohol dehydrogenase [NAD(P)+] CBR1</fullName>
        <ecNumber evidence="1">1.1.1.71</ecNumber>
    </alternativeName>
    <alternativeName>
        <fullName>NADPH-dependent carbonyl reductase 1</fullName>
    </alternativeName>
    <alternativeName>
        <fullName evidence="3">Prostaglandin 9-ketoreductase</fullName>
        <shortName evidence="3">PG-9-KR</shortName>
    </alternativeName>
    <alternativeName>
        <fullName evidence="3">Prostaglandin-E(2) 9-reductase</fullName>
        <ecNumber evidence="3">1.1.1.189</ecNumber>
    </alternativeName>
</protein>